<keyword id="KW-0175">Coiled coil</keyword>
<keyword id="KW-0472">Membrane</keyword>
<keyword id="KW-0496">Mitochondrion</keyword>
<keyword id="KW-0999">Mitochondrion inner membrane</keyword>
<keyword id="KW-1185">Reference proteome</keyword>
<keyword id="KW-0809">Transit peptide</keyword>
<keyword id="KW-0812">Transmembrane</keyword>
<keyword id="KW-1133">Transmembrane helix</keyword>
<reference key="1">
    <citation type="journal article" date="2005" name="Science">
        <title>The genome of the basidiomycetous yeast and human pathogen Cryptococcus neoformans.</title>
        <authorList>
            <person name="Loftus B.J."/>
            <person name="Fung E."/>
            <person name="Roncaglia P."/>
            <person name="Rowley D."/>
            <person name="Amedeo P."/>
            <person name="Bruno D."/>
            <person name="Vamathevan J."/>
            <person name="Miranda M."/>
            <person name="Anderson I.J."/>
            <person name="Fraser J.A."/>
            <person name="Allen J.E."/>
            <person name="Bosdet I.E."/>
            <person name="Brent M.R."/>
            <person name="Chiu R."/>
            <person name="Doering T.L."/>
            <person name="Donlin M.J."/>
            <person name="D'Souza C.A."/>
            <person name="Fox D.S."/>
            <person name="Grinberg V."/>
            <person name="Fu J."/>
            <person name="Fukushima M."/>
            <person name="Haas B.J."/>
            <person name="Huang J.C."/>
            <person name="Janbon G."/>
            <person name="Jones S.J.M."/>
            <person name="Koo H.L."/>
            <person name="Krzywinski M.I."/>
            <person name="Kwon-Chung K.J."/>
            <person name="Lengeler K.B."/>
            <person name="Maiti R."/>
            <person name="Marra M.A."/>
            <person name="Marra R.E."/>
            <person name="Mathewson C.A."/>
            <person name="Mitchell T.G."/>
            <person name="Pertea M."/>
            <person name="Riggs F.R."/>
            <person name="Salzberg S.L."/>
            <person name="Schein J.E."/>
            <person name="Shvartsbeyn A."/>
            <person name="Shin H."/>
            <person name="Shumway M."/>
            <person name="Specht C.A."/>
            <person name="Suh B.B."/>
            <person name="Tenney A."/>
            <person name="Utterback T.R."/>
            <person name="Wickes B.L."/>
            <person name="Wortman J.R."/>
            <person name="Wye N.H."/>
            <person name="Kronstad J.W."/>
            <person name="Lodge J.K."/>
            <person name="Heitman J."/>
            <person name="Davis R.W."/>
            <person name="Fraser C.M."/>
            <person name="Hyman R.W."/>
        </authorList>
    </citation>
    <scope>NUCLEOTIDE SEQUENCE [LARGE SCALE GENOMIC DNA]</scope>
    <source>
        <strain>JEC21 / ATCC MYA-565</strain>
    </source>
</reference>
<evidence type="ECO:0000250" key="1"/>
<evidence type="ECO:0000255" key="2"/>
<evidence type="ECO:0000256" key="3">
    <source>
        <dbReference type="SAM" id="MobiDB-lite"/>
    </source>
</evidence>
<evidence type="ECO:0000305" key="4"/>
<comment type="function">
    <text evidence="1">Required for the maintenance of the structure of the mitochondrial inner membrane. Involved in mitochondrial morphology. Causes growth arrest when highly overexpressed (By similarity).</text>
</comment>
<comment type="subunit">
    <text evidence="1">Homooligomer.</text>
</comment>
<comment type="subcellular location">
    <subcellularLocation>
        <location evidence="1">Mitochondrion inner membrane</location>
        <topology evidence="1">Multi-pass membrane protein</topology>
    </subcellularLocation>
</comment>
<comment type="similarity">
    <text evidence="4">Belongs to the SHE9 family.</text>
</comment>
<gene>
    <name type="primary">SHE9</name>
    <name type="ordered locus">CNG01940</name>
</gene>
<dbReference type="EMBL" id="AE017347">
    <property type="protein sequence ID" value="AAW44580.1"/>
    <property type="molecule type" value="Genomic_DNA"/>
</dbReference>
<dbReference type="RefSeq" id="XP_571887.1">
    <property type="nucleotide sequence ID" value="XM_571887.1"/>
</dbReference>
<dbReference type="SMR" id="P0CR46"/>
<dbReference type="PaxDb" id="214684-P0CR46"/>
<dbReference type="EnsemblFungi" id="AAW44580">
    <property type="protein sequence ID" value="AAW44580"/>
    <property type="gene ID" value="CNG01940"/>
</dbReference>
<dbReference type="GeneID" id="3258684"/>
<dbReference type="KEGG" id="cne:CNG01940"/>
<dbReference type="VEuPathDB" id="FungiDB:CNG01940"/>
<dbReference type="eggNOG" id="ENOG502QQ1E">
    <property type="taxonomic scope" value="Eukaryota"/>
</dbReference>
<dbReference type="HOGENOM" id="CLU_580048_0_0_1"/>
<dbReference type="InParanoid" id="P0CR46"/>
<dbReference type="OMA" id="EDPKSEM"/>
<dbReference type="OrthoDB" id="5595506at2759"/>
<dbReference type="Proteomes" id="UP000002149">
    <property type="component" value="Chromosome 7"/>
</dbReference>
<dbReference type="GO" id="GO:0005743">
    <property type="term" value="C:mitochondrial inner membrane"/>
    <property type="evidence" value="ECO:0000318"/>
    <property type="project" value="GO_Central"/>
</dbReference>
<dbReference type="GO" id="GO:0007007">
    <property type="term" value="P:inner mitochondrial membrane organization"/>
    <property type="evidence" value="ECO:0000318"/>
    <property type="project" value="GO_Central"/>
</dbReference>
<dbReference type="InterPro" id="IPR008839">
    <property type="entry name" value="MDM33_fungi"/>
</dbReference>
<dbReference type="PANTHER" id="PTHR31961">
    <property type="entry name" value="SENSITIVE TO HIGH EXPRESSION PROTEIN 9, MITOCHONDRIAL"/>
    <property type="match status" value="1"/>
</dbReference>
<dbReference type="PANTHER" id="PTHR31961:SF3">
    <property type="entry name" value="SENSITIVE TO HIGH EXPRESSION PROTEIN 9, MITOCHONDRIAL"/>
    <property type="match status" value="1"/>
</dbReference>
<dbReference type="Pfam" id="PF05546">
    <property type="entry name" value="She9_MDM33"/>
    <property type="match status" value="1"/>
</dbReference>
<accession>P0CR46</accession>
<accession>Q55PC7</accession>
<accession>Q5KE29</accession>
<organism>
    <name type="scientific">Cryptococcus neoformans var. neoformans serotype D (strain JEC21 / ATCC MYA-565)</name>
    <name type="common">Filobasidiella neoformans</name>
    <dbReference type="NCBI Taxonomy" id="214684"/>
    <lineage>
        <taxon>Eukaryota</taxon>
        <taxon>Fungi</taxon>
        <taxon>Dikarya</taxon>
        <taxon>Basidiomycota</taxon>
        <taxon>Agaricomycotina</taxon>
        <taxon>Tremellomycetes</taxon>
        <taxon>Tremellales</taxon>
        <taxon>Cryptococcaceae</taxon>
        <taxon>Cryptococcus</taxon>
        <taxon>Cryptococcus neoformans species complex</taxon>
    </lineage>
</organism>
<sequence>MACRYPFSPAKVAITRFFYPSPLSRSTTPLFCPPSCRIRVGNTSRMLTSSSSVASEDPKSEMAKFLASPNPKSSASEPGPSPHDVLSAPTSAGHISEAEETLSDQLRNPGSSSSSSPSQSSTNNLSSKNAPFKLSSTYSLPSNISVPPEVREHLIEWSKNVLEHSRYVIQEAQKKFVGLGLKVNEMTGYQEVERLKYMVFEKEDELQRLREHARTAKAAYDEAVAARSEAQRETNILLERKHSWTDADVSKFTSLVRSDHTSSHAVASTSIALKDAEIAVDKSFSQLMQVILQRYHEEQVWSDKIRSVSTWANVAGLAINFIIFVGAVLLVEPWKRKRLVEKLEERVASMMERVDHRLEGVEGHLERVAAGSASASAIKEQHSDAAIQGVEDMPSNSTANPLEFVSPQTIPLMAAVDPTINGSESQSDPFFTQTIRGFPNYLDPLVKPSQKRDLAVAGMAGAVAAWILIGAVRLVRA</sequence>
<feature type="transit peptide" description="Mitochondrion" evidence="2">
    <location>
        <begin position="1"/>
        <end status="unknown"/>
    </location>
</feature>
<feature type="chain" id="PRO_0000351055" description="Sensitive to high expression protein 9 homolog, mitochondrial">
    <location>
        <begin status="unknown"/>
        <end position="477"/>
    </location>
</feature>
<feature type="topological domain" description="Mitochondrial matrix" evidence="2">
    <location>
        <begin status="unknown"/>
        <end position="310"/>
    </location>
</feature>
<feature type="transmembrane region" description="Helical" evidence="2">
    <location>
        <begin position="311"/>
        <end position="331"/>
    </location>
</feature>
<feature type="topological domain" description="Mitochondrial intermembrane" evidence="2">
    <location>
        <begin position="332"/>
        <end position="454"/>
    </location>
</feature>
<feature type="transmembrane region" description="Helical" evidence="2">
    <location>
        <begin position="455"/>
        <end position="475"/>
    </location>
</feature>
<feature type="topological domain" description="Mitochondrial matrix" evidence="2">
    <location>
        <begin position="476"/>
        <end position="477"/>
    </location>
</feature>
<feature type="region of interest" description="Disordered" evidence="3">
    <location>
        <begin position="45"/>
        <end position="128"/>
    </location>
</feature>
<feature type="coiled-coil region" evidence="2">
    <location>
        <begin position="190"/>
        <end position="233"/>
    </location>
</feature>
<feature type="compositionally biased region" description="Polar residues" evidence="3">
    <location>
        <begin position="45"/>
        <end position="54"/>
    </location>
</feature>
<feature type="compositionally biased region" description="Low complexity" evidence="3">
    <location>
        <begin position="111"/>
        <end position="128"/>
    </location>
</feature>
<proteinExistence type="inferred from homology"/>
<name>SHE9_CRYNJ</name>
<protein>
    <recommendedName>
        <fullName>Sensitive to high expression protein 9 homolog, mitochondrial</fullName>
    </recommendedName>
</protein>